<proteinExistence type="predicted"/>
<feature type="chain" id="PRO_0000202293" description="Uncharacterized protein TP_0638">
    <location>
        <begin position="1"/>
        <end position="144"/>
    </location>
</feature>
<feature type="transmembrane region" description="Helical" evidence="1">
    <location>
        <begin position="7"/>
        <end position="29"/>
    </location>
</feature>
<feature type="transmembrane region" description="Helical" evidence="1">
    <location>
        <begin position="51"/>
        <end position="73"/>
    </location>
</feature>
<feature type="transmembrane region" description="Helical" evidence="1">
    <location>
        <begin position="85"/>
        <end position="107"/>
    </location>
</feature>
<feature type="transmembrane region" description="Helical" evidence="1">
    <location>
        <begin position="122"/>
        <end position="139"/>
    </location>
</feature>
<accession>O83645</accession>
<sequence>MGTLRRFPASVLQIALALFLLASGARDLVHVDAGVFNAAVYFLGGLFRGHVAIGVLTLAVSLCCLTAGFFLLVDFLRPELSCVSAVLALFVVLWALNMVLVDVVGAFGRGKVLQNVSSALEHLHHTAVDLLVLGALIFVRQHTR</sequence>
<protein>
    <recommendedName>
        <fullName>Uncharacterized protein TP_0638</fullName>
    </recommendedName>
</protein>
<comment type="subcellular location">
    <subcellularLocation>
        <location evidence="2">Cell membrane</location>
        <topology evidence="2">Multi-pass membrane protein</topology>
    </subcellularLocation>
</comment>
<organism>
    <name type="scientific">Treponema pallidum (strain Nichols)</name>
    <dbReference type="NCBI Taxonomy" id="243276"/>
    <lineage>
        <taxon>Bacteria</taxon>
        <taxon>Pseudomonadati</taxon>
        <taxon>Spirochaetota</taxon>
        <taxon>Spirochaetia</taxon>
        <taxon>Spirochaetales</taxon>
        <taxon>Treponemataceae</taxon>
        <taxon>Treponema</taxon>
    </lineage>
</organism>
<keyword id="KW-1003">Cell membrane</keyword>
<keyword id="KW-0472">Membrane</keyword>
<keyword id="KW-1185">Reference proteome</keyword>
<keyword id="KW-0812">Transmembrane</keyword>
<keyword id="KW-1133">Transmembrane helix</keyword>
<dbReference type="EMBL" id="AE000520">
    <property type="protein sequence ID" value="AAC65625.1"/>
    <property type="molecule type" value="Genomic_DNA"/>
</dbReference>
<dbReference type="PIR" id="E71298">
    <property type="entry name" value="E71298"/>
</dbReference>
<dbReference type="RefSeq" id="WP_010882083.1">
    <property type="nucleotide sequence ID" value="NC_021490.2"/>
</dbReference>
<dbReference type="IntAct" id="O83645">
    <property type="interactions" value="1"/>
</dbReference>
<dbReference type="EnsemblBacteria" id="AAC65625">
    <property type="protein sequence ID" value="AAC65625"/>
    <property type="gene ID" value="TP_0638"/>
</dbReference>
<dbReference type="KEGG" id="tpa:TP_0638"/>
<dbReference type="KEGG" id="tpw:TPANIC_0638"/>
<dbReference type="HOGENOM" id="CLU_150098_0_0_12"/>
<dbReference type="Proteomes" id="UP000000811">
    <property type="component" value="Chromosome"/>
</dbReference>
<dbReference type="GO" id="GO:0005886">
    <property type="term" value="C:plasma membrane"/>
    <property type="evidence" value="ECO:0007669"/>
    <property type="project" value="UniProtKB-SubCell"/>
</dbReference>
<gene>
    <name type="ordered locus">TP_0638</name>
</gene>
<reference key="1">
    <citation type="journal article" date="1998" name="Science">
        <title>Complete genome sequence of Treponema pallidum, the syphilis spirochete.</title>
        <authorList>
            <person name="Fraser C.M."/>
            <person name="Norris S.J."/>
            <person name="Weinstock G.M."/>
            <person name="White O."/>
            <person name="Sutton G.G."/>
            <person name="Dodson R.J."/>
            <person name="Gwinn M.L."/>
            <person name="Hickey E.K."/>
            <person name="Clayton R.A."/>
            <person name="Ketchum K.A."/>
            <person name="Sodergren E."/>
            <person name="Hardham J.M."/>
            <person name="McLeod M.P."/>
            <person name="Salzberg S.L."/>
            <person name="Peterson J.D."/>
            <person name="Khalak H.G."/>
            <person name="Richardson D.L."/>
            <person name="Howell J.K."/>
            <person name="Chidambaram M."/>
            <person name="Utterback T.R."/>
            <person name="McDonald L.A."/>
            <person name="Artiach P."/>
            <person name="Bowman C."/>
            <person name="Cotton M.D."/>
            <person name="Fujii C."/>
            <person name="Garland S.A."/>
            <person name="Hatch B."/>
            <person name="Horst K."/>
            <person name="Roberts K.M."/>
            <person name="Sandusky M."/>
            <person name="Weidman J.F."/>
            <person name="Smith H.O."/>
            <person name="Venter J.C."/>
        </authorList>
    </citation>
    <scope>NUCLEOTIDE SEQUENCE [LARGE SCALE GENOMIC DNA]</scope>
    <source>
        <strain>Nichols</strain>
    </source>
</reference>
<name>Y638_TREPA</name>
<evidence type="ECO:0000255" key="1"/>
<evidence type="ECO:0000305" key="2"/>